<comment type="function">
    <text evidence="1">Involved in the modulation of the specificity of the ClpAP-mediated ATP-dependent protein degradation.</text>
</comment>
<comment type="subunit">
    <text evidence="1">Binds to the N-terminal domain of the chaperone ClpA.</text>
</comment>
<comment type="similarity">
    <text evidence="1">Belongs to the ClpS family.</text>
</comment>
<gene>
    <name evidence="1" type="primary">clpS</name>
    <name type="ordered locus">Vapar_2650</name>
</gene>
<name>CLPS_VARPS</name>
<organism>
    <name type="scientific">Variovorax paradoxus (strain S110)</name>
    <dbReference type="NCBI Taxonomy" id="543728"/>
    <lineage>
        <taxon>Bacteria</taxon>
        <taxon>Pseudomonadati</taxon>
        <taxon>Pseudomonadota</taxon>
        <taxon>Betaproteobacteria</taxon>
        <taxon>Burkholderiales</taxon>
        <taxon>Comamonadaceae</taxon>
        <taxon>Variovorax</taxon>
    </lineage>
</organism>
<accession>C5CLL8</accession>
<sequence>MATRIPKTPSTPPAQKPAGDDGDSVVLERRPQKTAPPQMYQVVMLNDDYTPMEFVIVVLQEYFNKDRETATQIMLKIHLDGRGVCGVYSRDLAATKVNQVMEAAHQAGHPLQCVSEPIA</sequence>
<feature type="chain" id="PRO_1000204977" description="ATP-dependent Clp protease adapter protein ClpS">
    <location>
        <begin position="1"/>
        <end position="119"/>
    </location>
</feature>
<feature type="region of interest" description="Disordered" evidence="2">
    <location>
        <begin position="1"/>
        <end position="33"/>
    </location>
</feature>
<protein>
    <recommendedName>
        <fullName evidence="1">ATP-dependent Clp protease adapter protein ClpS</fullName>
    </recommendedName>
</protein>
<dbReference type="EMBL" id="CP001635">
    <property type="protein sequence ID" value="ACS19275.1"/>
    <property type="molecule type" value="Genomic_DNA"/>
</dbReference>
<dbReference type="SMR" id="C5CLL8"/>
<dbReference type="STRING" id="543728.Vapar_2650"/>
<dbReference type="KEGG" id="vap:Vapar_2650"/>
<dbReference type="eggNOG" id="COG2127">
    <property type="taxonomic scope" value="Bacteria"/>
</dbReference>
<dbReference type="HOGENOM" id="CLU_134358_2_1_4"/>
<dbReference type="OrthoDB" id="9796121at2"/>
<dbReference type="GO" id="GO:0030163">
    <property type="term" value="P:protein catabolic process"/>
    <property type="evidence" value="ECO:0007669"/>
    <property type="project" value="InterPro"/>
</dbReference>
<dbReference type="GO" id="GO:0006508">
    <property type="term" value="P:proteolysis"/>
    <property type="evidence" value="ECO:0007669"/>
    <property type="project" value="UniProtKB-UniRule"/>
</dbReference>
<dbReference type="FunFam" id="3.30.1390.10:FF:000002">
    <property type="entry name" value="ATP-dependent Clp protease adapter protein ClpS"/>
    <property type="match status" value="1"/>
</dbReference>
<dbReference type="Gene3D" id="3.30.1390.10">
    <property type="match status" value="1"/>
</dbReference>
<dbReference type="HAMAP" id="MF_00302">
    <property type="entry name" value="ClpS"/>
    <property type="match status" value="1"/>
</dbReference>
<dbReference type="InterPro" id="IPR022935">
    <property type="entry name" value="ClpS"/>
</dbReference>
<dbReference type="InterPro" id="IPR003769">
    <property type="entry name" value="ClpS_core"/>
</dbReference>
<dbReference type="InterPro" id="IPR014719">
    <property type="entry name" value="Ribosomal_bL12_C/ClpS-like"/>
</dbReference>
<dbReference type="NCBIfam" id="NF000672">
    <property type="entry name" value="PRK00033.1-5"/>
    <property type="match status" value="1"/>
</dbReference>
<dbReference type="PANTHER" id="PTHR33473:SF19">
    <property type="entry name" value="ATP-DEPENDENT CLP PROTEASE ADAPTER PROTEIN CLPS"/>
    <property type="match status" value="1"/>
</dbReference>
<dbReference type="PANTHER" id="PTHR33473">
    <property type="entry name" value="ATP-DEPENDENT CLP PROTEASE ADAPTER PROTEIN CLPS1, CHLOROPLASTIC"/>
    <property type="match status" value="1"/>
</dbReference>
<dbReference type="Pfam" id="PF02617">
    <property type="entry name" value="ClpS"/>
    <property type="match status" value="1"/>
</dbReference>
<dbReference type="SUPFAM" id="SSF54736">
    <property type="entry name" value="ClpS-like"/>
    <property type="match status" value="1"/>
</dbReference>
<reference key="1">
    <citation type="journal article" date="2011" name="J. Bacteriol.">
        <title>Complete genome sequence of the metabolically versatile plant growth-promoting endophyte, Variovorax paradoxus S110.</title>
        <authorList>
            <person name="Han J.I."/>
            <person name="Choi H.K."/>
            <person name="Lee S.W."/>
            <person name="Orwin P.M."/>
            <person name="Kim J."/>
            <person name="Laroe S.L."/>
            <person name="Kim T.G."/>
            <person name="O'Neil J."/>
            <person name="Leadbetter J.R."/>
            <person name="Lee S.Y."/>
            <person name="Hur C.G."/>
            <person name="Spain J.C."/>
            <person name="Ovchinnikova G."/>
            <person name="Goodwin L."/>
            <person name="Han C."/>
        </authorList>
    </citation>
    <scope>NUCLEOTIDE SEQUENCE [LARGE SCALE GENOMIC DNA]</scope>
    <source>
        <strain>S110</strain>
    </source>
</reference>
<proteinExistence type="inferred from homology"/>
<evidence type="ECO:0000255" key="1">
    <source>
        <dbReference type="HAMAP-Rule" id="MF_00302"/>
    </source>
</evidence>
<evidence type="ECO:0000256" key="2">
    <source>
        <dbReference type="SAM" id="MobiDB-lite"/>
    </source>
</evidence>